<evidence type="ECO:0000255" key="1">
    <source>
        <dbReference type="HAMAP-Rule" id="MF_00006"/>
    </source>
</evidence>
<feature type="chain" id="PRO_1000000524" description="Argininosuccinate lyase">
    <location>
        <begin position="1"/>
        <end position="464"/>
    </location>
</feature>
<accession>A6VE40</accession>
<dbReference type="EC" id="4.3.2.1" evidence="1"/>
<dbReference type="EMBL" id="CP000744">
    <property type="protein sequence ID" value="ABR81927.1"/>
    <property type="molecule type" value="Genomic_DNA"/>
</dbReference>
<dbReference type="RefSeq" id="WP_012077871.1">
    <property type="nucleotide sequence ID" value="NC_009656.1"/>
</dbReference>
<dbReference type="SMR" id="A6VE40"/>
<dbReference type="KEGG" id="pap:PSPA7_6009"/>
<dbReference type="HOGENOM" id="CLU_027272_2_3_6"/>
<dbReference type="UniPathway" id="UPA00068">
    <property type="reaction ID" value="UER00114"/>
</dbReference>
<dbReference type="Proteomes" id="UP000001582">
    <property type="component" value="Chromosome"/>
</dbReference>
<dbReference type="GO" id="GO:0005829">
    <property type="term" value="C:cytosol"/>
    <property type="evidence" value="ECO:0007669"/>
    <property type="project" value="TreeGrafter"/>
</dbReference>
<dbReference type="GO" id="GO:0004056">
    <property type="term" value="F:argininosuccinate lyase activity"/>
    <property type="evidence" value="ECO:0007669"/>
    <property type="project" value="UniProtKB-UniRule"/>
</dbReference>
<dbReference type="GO" id="GO:0042450">
    <property type="term" value="P:arginine biosynthetic process via ornithine"/>
    <property type="evidence" value="ECO:0007669"/>
    <property type="project" value="InterPro"/>
</dbReference>
<dbReference type="GO" id="GO:0006526">
    <property type="term" value="P:L-arginine biosynthetic process"/>
    <property type="evidence" value="ECO:0007669"/>
    <property type="project" value="UniProtKB-UniRule"/>
</dbReference>
<dbReference type="CDD" id="cd01359">
    <property type="entry name" value="Argininosuccinate_lyase"/>
    <property type="match status" value="1"/>
</dbReference>
<dbReference type="FunFam" id="1.10.275.10:FF:000002">
    <property type="entry name" value="Argininosuccinate lyase"/>
    <property type="match status" value="1"/>
</dbReference>
<dbReference type="FunFam" id="1.10.40.30:FF:000001">
    <property type="entry name" value="Argininosuccinate lyase"/>
    <property type="match status" value="1"/>
</dbReference>
<dbReference type="FunFam" id="1.20.200.10:FF:000015">
    <property type="entry name" value="argininosuccinate lyase isoform X2"/>
    <property type="match status" value="1"/>
</dbReference>
<dbReference type="Gene3D" id="1.10.40.30">
    <property type="entry name" value="Fumarase/aspartase (C-terminal domain)"/>
    <property type="match status" value="1"/>
</dbReference>
<dbReference type="Gene3D" id="1.20.200.10">
    <property type="entry name" value="Fumarase/aspartase (Central domain)"/>
    <property type="match status" value="1"/>
</dbReference>
<dbReference type="Gene3D" id="1.10.275.10">
    <property type="entry name" value="Fumarase/aspartase (N-terminal domain)"/>
    <property type="match status" value="1"/>
</dbReference>
<dbReference type="HAMAP" id="MF_00006">
    <property type="entry name" value="Arg_succ_lyase"/>
    <property type="match status" value="1"/>
</dbReference>
<dbReference type="InterPro" id="IPR029419">
    <property type="entry name" value="Arg_succ_lyase_C"/>
</dbReference>
<dbReference type="InterPro" id="IPR009049">
    <property type="entry name" value="Argininosuccinate_lyase"/>
</dbReference>
<dbReference type="InterPro" id="IPR024083">
    <property type="entry name" value="Fumarase/histidase_N"/>
</dbReference>
<dbReference type="InterPro" id="IPR020557">
    <property type="entry name" value="Fumarate_lyase_CS"/>
</dbReference>
<dbReference type="InterPro" id="IPR000362">
    <property type="entry name" value="Fumarate_lyase_fam"/>
</dbReference>
<dbReference type="InterPro" id="IPR022761">
    <property type="entry name" value="Fumarate_lyase_N"/>
</dbReference>
<dbReference type="InterPro" id="IPR008948">
    <property type="entry name" value="L-Aspartase-like"/>
</dbReference>
<dbReference type="NCBIfam" id="TIGR00838">
    <property type="entry name" value="argH"/>
    <property type="match status" value="1"/>
</dbReference>
<dbReference type="PANTHER" id="PTHR43814">
    <property type="entry name" value="ARGININOSUCCINATE LYASE"/>
    <property type="match status" value="1"/>
</dbReference>
<dbReference type="PANTHER" id="PTHR43814:SF1">
    <property type="entry name" value="ARGININOSUCCINATE LYASE"/>
    <property type="match status" value="1"/>
</dbReference>
<dbReference type="Pfam" id="PF14698">
    <property type="entry name" value="ASL_C2"/>
    <property type="match status" value="1"/>
</dbReference>
<dbReference type="Pfam" id="PF00206">
    <property type="entry name" value="Lyase_1"/>
    <property type="match status" value="1"/>
</dbReference>
<dbReference type="PRINTS" id="PR00145">
    <property type="entry name" value="ARGSUCLYASE"/>
</dbReference>
<dbReference type="PRINTS" id="PR00149">
    <property type="entry name" value="FUMRATELYASE"/>
</dbReference>
<dbReference type="SUPFAM" id="SSF48557">
    <property type="entry name" value="L-aspartase-like"/>
    <property type="match status" value="1"/>
</dbReference>
<dbReference type="PROSITE" id="PS00163">
    <property type="entry name" value="FUMARATE_LYASES"/>
    <property type="match status" value="1"/>
</dbReference>
<proteinExistence type="inferred from homology"/>
<protein>
    <recommendedName>
        <fullName evidence="1">Argininosuccinate lyase</fullName>
        <shortName evidence="1">ASAL</shortName>
        <ecNumber evidence="1">4.3.2.1</ecNumber>
    </recommendedName>
    <alternativeName>
        <fullName evidence="1">Arginosuccinase</fullName>
    </alternativeName>
</protein>
<reference key="1">
    <citation type="submission" date="2007-06" db="EMBL/GenBank/DDBJ databases">
        <authorList>
            <person name="Dodson R.J."/>
            <person name="Harkins D."/>
            <person name="Paulsen I.T."/>
        </authorList>
    </citation>
    <scope>NUCLEOTIDE SEQUENCE [LARGE SCALE GENOMIC DNA]</scope>
    <source>
        <strain>DSM 24068 / PA7</strain>
    </source>
</reference>
<keyword id="KW-0028">Amino-acid biosynthesis</keyword>
<keyword id="KW-0055">Arginine biosynthesis</keyword>
<keyword id="KW-0963">Cytoplasm</keyword>
<keyword id="KW-0456">Lyase</keyword>
<name>ARLY_PSEP7</name>
<comment type="catalytic activity">
    <reaction evidence="1">
        <text>2-(N(omega)-L-arginino)succinate = fumarate + L-arginine</text>
        <dbReference type="Rhea" id="RHEA:24020"/>
        <dbReference type="ChEBI" id="CHEBI:29806"/>
        <dbReference type="ChEBI" id="CHEBI:32682"/>
        <dbReference type="ChEBI" id="CHEBI:57472"/>
        <dbReference type="EC" id="4.3.2.1"/>
    </reaction>
</comment>
<comment type="pathway">
    <text evidence="1">Amino-acid biosynthesis; L-arginine biosynthesis; L-arginine from L-ornithine and carbamoyl phosphate: step 3/3.</text>
</comment>
<comment type="subcellular location">
    <subcellularLocation>
        <location evidence="1">Cytoplasm</location>
    </subcellularLocation>
</comment>
<comment type="similarity">
    <text evidence="1">Belongs to the lyase 1 family. Argininosuccinate lyase subfamily.</text>
</comment>
<sequence>MSVEKTNQSWGGRFSEPVDAFVARFTASVDFDKRLYRHDIMGSIAHATMLAKVGVLSDAERDAIVDGLQQIQAEIEAGSFDWRVDLEDVHMNIEARLTDRIGVTGKKLHTGRSRNDQVATDIRLWLRDEIDTILAEITRLQQGLLGLAEAEADTIMPGFTHLQTAQPVTFGHHLLAWFEMLGRDYERLVDCHRRVNRMPLGSAALAGTTYPIQREITCQLLGFEAIGGNSLDGVSDRDFAIEFCAAASLAMMHLSRFSEELVLWTSAQFQFIDLPDRFCTGSSIMPQKKNPDVPELVRGKSGRVFGALTGLLTLMKGQPLAYNKDNQEDKEPLFDAADTLRDSLRAFADMVPAIRPRREVMREAARRGFSTATDLADYLVRKGLPFRDCHEIVGHAVKYGVDSGKDLAEMSLDELRRFSEQIDADVFAVLTLEGSVNARDHIGGTAPNQVRAAVARGRQLLAQR</sequence>
<gene>
    <name evidence="1" type="primary">argH</name>
    <name type="ordered locus">PSPA7_6009</name>
</gene>
<organism>
    <name type="scientific">Pseudomonas paraeruginosa (strain DSM 24068 / PA7)</name>
    <name type="common">Pseudomonas aeruginosa (strain PA7)</name>
    <dbReference type="NCBI Taxonomy" id="381754"/>
    <lineage>
        <taxon>Bacteria</taxon>
        <taxon>Pseudomonadati</taxon>
        <taxon>Pseudomonadota</taxon>
        <taxon>Gammaproteobacteria</taxon>
        <taxon>Pseudomonadales</taxon>
        <taxon>Pseudomonadaceae</taxon>
        <taxon>Pseudomonas</taxon>
        <taxon>Pseudomonas paraeruginosa</taxon>
    </lineage>
</organism>